<keyword id="KW-0325">Glycoprotein</keyword>
<keyword id="KW-0333">Golgi apparatus</keyword>
<keyword id="KW-0337">GPI-anchor biosynthesis</keyword>
<keyword id="KW-0378">Hydrolase</keyword>
<keyword id="KW-0472">Membrane</keyword>
<keyword id="KW-1185">Reference proteome</keyword>
<keyword id="KW-0732">Signal</keyword>
<keyword id="KW-0812">Transmembrane</keyword>
<keyword id="KW-1133">Transmembrane helix</keyword>
<comment type="function">
    <text evidence="1">Involved in the fatty acid remodeling steps of GPI-anchor maturation where the unsaturated acyl chain at sn-2 of inositol phosphate is replaced by a saturated stearoyl chain. May catalyze the first step of the fatty acid remodeling, by removing the unsaturated acyl chain at sn-2 of inositol phosphate, generating a lyso-GPI intermediate. The fatty acid remodeling steps is critical for the integration of GPI-APs into lipid rafts.</text>
</comment>
<comment type="subcellular location">
    <subcellularLocation>
        <location evidence="1">Golgi apparatus membrane</location>
        <topology evidence="3">Multi-pass membrane protein</topology>
    </subcellularLocation>
</comment>
<comment type="similarity">
    <text evidence="4">Belongs to the PGAP3 family.</text>
</comment>
<dbReference type="EC" id="3.1.1.-" evidence="1"/>
<dbReference type="EMBL" id="BC134683">
    <property type="protein sequence ID" value="AAI34684.1"/>
    <property type="molecule type" value="mRNA"/>
</dbReference>
<dbReference type="RefSeq" id="NP_001098833.1">
    <property type="nucleotide sequence ID" value="NM_001105363.1"/>
</dbReference>
<dbReference type="FunCoup" id="A7YWP2">
    <property type="interactions" value="2001"/>
</dbReference>
<dbReference type="STRING" id="9913.ENSBTAP00000034758"/>
<dbReference type="GlyCosmos" id="A7YWP2">
    <property type="glycosylation" value="1 site, No reported glycans"/>
</dbReference>
<dbReference type="GlyGen" id="A7YWP2">
    <property type="glycosylation" value="1 site"/>
</dbReference>
<dbReference type="PaxDb" id="9913-ENSBTAP00000034758"/>
<dbReference type="GeneID" id="513258"/>
<dbReference type="KEGG" id="bta:513258"/>
<dbReference type="CTD" id="93210"/>
<dbReference type="VEuPathDB" id="HostDB:ENSBTAG00000011732"/>
<dbReference type="eggNOG" id="KOG2970">
    <property type="taxonomic scope" value="Eukaryota"/>
</dbReference>
<dbReference type="HOGENOM" id="CLU_032917_1_0_1"/>
<dbReference type="InParanoid" id="A7YWP2"/>
<dbReference type="OMA" id="DFMIEDC"/>
<dbReference type="OrthoDB" id="419770at2759"/>
<dbReference type="TreeFam" id="TF300031"/>
<dbReference type="Proteomes" id="UP000009136">
    <property type="component" value="Chromosome 19"/>
</dbReference>
<dbReference type="Bgee" id="ENSBTAG00000011732">
    <property type="expression patterns" value="Expressed in pigment epithelium of eye and 105 other cell types or tissues"/>
</dbReference>
<dbReference type="GO" id="GO:0005789">
    <property type="term" value="C:endoplasmic reticulum membrane"/>
    <property type="evidence" value="ECO:0000250"/>
    <property type="project" value="UniProtKB"/>
</dbReference>
<dbReference type="GO" id="GO:0000139">
    <property type="term" value="C:Golgi membrane"/>
    <property type="evidence" value="ECO:0007669"/>
    <property type="project" value="UniProtKB-SubCell"/>
</dbReference>
<dbReference type="GO" id="GO:0016788">
    <property type="term" value="F:hydrolase activity, acting on ester bonds"/>
    <property type="evidence" value="ECO:0000250"/>
    <property type="project" value="UniProtKB"/>
</dbReference>
<dbReference type="GO" id="GO:0006506">
    <property type="term" value="P:GPI anchor biosynthetic process"/>
    <property type="evidence" value="ECO:0000318"/>
    <property type="project" value="GO_Central"/>
</dbReference>
<dbReference type="GO" id="GO:0006505">
    <property type="term" value="P:GPI anchor metabolic process"/>
    <property type="evidence" value="ECO:0000250"/>
    <property type="project" value="UniProtKB"/>
</dbReference>
<dbReference type="InterPro" id="IPR007217">
    <property type="entry name" value="Per1-like"/>
</dbReference>
<dbReference type="PANTHER" id="PTHR13148">
    <property type="entry name" value="PER1-RELATED"/>
    <property type="match status" value="1"/>
</dbReference>
<dbReference type="PANTHER" id="PTHR13148:SF0">
    <property type="entry name" value="POST-GPI ATTACHMENT TO PROTEINS FACTOR 3"/>
    <property type="match status" value="1"/>
</dbReference>
<dbReference type="Pfam" id="PF04080">
    <property type="entry name" value="Per1"/>
    <property type="match status" value="1"/>
</dbReference>
<organism>
    <name type="scientific">Bos taurus</name>
    <name type="common">Bovine</name>
    <dbReference type="NCBI Taxonomy" id="9913"/>
    <lineage>
        <taxon>Eukaryota</taxon>
        <taxon>Metazoa</taxon>
        <taxon>Chordata</taxon>
        <taxon>Craniata</taxon>
        <taxon>Vertebrata</taxon>
        <taxon>Euteleostomi</taxon>
        <taxon>Mammalia</taxon>
        <taxon>Eutheria</taxon>
        <taxon>Laurasiatheria</taxon>
        <taxon>Artiodactyla</taxon>
        <taxon>Ruminantia</taxon>
        <taxon>Pecora</taxon>
        <taxon>Bovidae</taxon>
        <taxon>Bovinae</taxon>
        <taxon>Bos</taxon>
    </lineage>
</organism>
<feature type="signal peptide" evidence="3">
    <location>
        <begin position="1"/>
        <end position="23"/>
    </location>
</feature>
<feature type="chain" id="PRO_0000339354" description="GPI-specific phospholipase A2-like PGAP3">
    <location>
        <begin position="24"/>
        <end position="319"/>
    </location>
</feature>
<feature type="topological domain" description="Lumenal" evidence="3">
    <location>
        <begin position="24"/>
        <end position="101"/>
    </location>
</feature>
<feature type="transmembrane region" description="Helical" evidence="3">
    <location>
        <begin position="102"/>
        <end position="122"/>
    </location>
</feature>
<feature type="topological domain" description="Cytoplasmic" evidence="3">
    <location>
        <begin position="123"/>
        <end position="135"/>
    </location>
</feature>
<feature type="transmembrane region" description="Helical" evidence="3">
    <location>
        <begin position="136"/>
        <end position="156"/>
    </location>
</feature>
<feature type="topological domain" description="Lumenal" evidence="3">
    <location>
        <begin position="157"/>
        <end position="169"/>
    </location>
</feature>
<feature type="transmembrane region" description="Helical" evidence="3">
    <location>
        <begin position="170"/>
        <end position="190"/>
    </location>
</feature>
<feature type="topological domain" description="Cytoplasmic" evidence="3">
    <location>
        <begin position="191"/>
        <end position="200"/>
    </location>
</feature>
<feature type="transmembrane region" description="Helical" evidence="3">
    <location>
        <begin position="201"/>
        <end position="221"/>
    </location>
</feature>
<feature type="topological domain" description="Lumenal" evidence="3">
    <location>
        <begin position="222"/>
        <end position="224"/>
    </location>
</feature>
<feature type="transmembrane region" description="Helical" evidence="3">
    <location>
        <begin position="225"/>
        <end position="245"/>
    </location>
</feature>
<feature type="topological domain" description="Cytoplasmic" evidence="3">
    <location>
        <begin position="246"/>
        <end position="257"/>
    </location>
</feature>
<feature type="transmembrane region" description="Helical" evidence="3">
    <location>
        <begin position="258"/>
        <end position="278"/>
    </location>
</feature>
<feature type="topological domain" description="Lumenal" evidence="3">
    <location>
        <begin position="279"/>
        <end position="281"/>
    </location>
</feature>
<feature type="transmembrane region" description="Helical" evidence="3">
    <location>
        <begin position="282"/>
        <end position="302"/>
    </location>
</feature>
<feature type="topological domain" description="Cytoplasmic" evidence="3">
    <location>
        <begin position="303"/>
        <end position="319"/>
    </location>
</feature>
<feature type="glycosylation site" description="N-linked (GlcNAc...) asparagine" evidence="3">
    <location>
        <position position="40"/>
    </location>
</feature>
<sequence length="319" mass="36056">MAGRTARLVLLAGAAALASGSQGDREPVYRDCVLRCEERNCSGGALKHFRSRQPIYMSLAGWTCRDDCKYECMWVTVGLYLQEGQKVPQFHGKWPFSRFLCFQEPASAVASFLNGLASLVMLCRYRTSVPASSPMYPTCVAFAWVSLNAWFWSTVFHTRDTDLTEKMDYFCASTVILHSIYLCCVRTVGLQHPAMASAFRALLLLLLTAHVSYLSLIHFDYGYNMAANVAIGLLNAAWWLAWCLWNQRLPHVHKCVAVVLLLQGLSLLELLDFPPLFWVLDAHAIWHISTIPVHVLFFSFLEDDSLYLLKESEAKVKLD</sequence>
<accession>A7YWP2</accession>
<proteinExistence type="evidence at transcript level"/>
<gene>
    <name evidence="2" type="primary">PGAP3</name>
    <name type="synonym">PERLD1</name>
</gene>
<name>PGAP3_BOVIN</name>
<protein>
    <recommendedName>
        <fullName evidence="2">GPI-specific phospholipase A2-like PGAP3</fullName>
        <ecNumber evidence="1">3.1.1.-</ecNumber>
    </recommendedName>
    <alternativeName>
        <fullName>PER1-like domain-containing protein 1</fullName>
    </alternativeName>
    <alternativeName>
        <fullName>Post-GPI attachment to proteins factor 3</fullName>
    </alternativeName>
</protein>
<reference key="1">
    <citation type="submission" date="2007-03" db="EMBL/GenBank/DDBJ databases">
        <authorList>
            <consortium name="NIH - Mammalian Gene Collection (MGC) project"/>
        </authorList>
    </citation>
    <scope>NUCLEOTIDE SEQUENCE [LARGE SCALE MRNA]</scope>
    <source>
        <strain>Hereford</strain>
        <tissue>Fetal muscle</tissue>
    </source>
</reference>
<evidence type="ECO:0000250" key="1">
    <source>
        <dbReference type="UniProtKB" id="A2V7M9"/>
    </source>
</evidence>
<evidence type="ECO:0000250" key="2">
    <source>
        <dbReference type="UniProtKB" id="Q96FM1"/>
    </source>
</evidence>
<evidence type="ECO:0000255" key="3"/>
<evidence type="ECO:0000305" key="4"/>